<feature type="chain" id="PRO_0000159632" description="Archaemetzincin">
    <location>
        <begin position="1"/>
        <end position="192"/>
    </location>
</feature>
<feature type="active site" description="Proton acceptor" evidence="1">
    <location>
        <position position="138"/>
    </location>
</feature>
<feature type="binding site" evidence="1">
    <location>
        <position position="137"/>
    </location>
    <ligand>
        <name>Zn(2+)</name>
        <dbReference type="ChEBI" id="CHEBI:29105"/>
        <label>1</label>
        <note>catalytic</note>
    </ligand>
</feature>
<feature type="binding site" evidence="1">
    <location>
        <position position="141"/>
    </location>
    <ligand>
        <name>Zn(2+)</name>
        <dbReference type="ChEBI" id="CHEBI:29105"/>
        <label>1</label>
        <note>catalytic</note>
    </ligand>
</feature>
<feature type="binding site" evidence="1">
    <location>
        <position position="147"/>
    </location>
    <ligand>
        <name>Zn(2+)</name>
        <dbReference type="ChEBI" id="CHEBI:29105"/>
        <label>1</label>
        <note>catalytic</note>
    </ligand>
</feature>
<feature type="binding site" evidence="1">
    <location>
        <position position="148"/>
    </location>
    <ligand>
        <name>Zn(2+)</name>
        <dbReference type="ChEBI" id="CHEBI:29105"/>
        <label>2</label>
    </ligand>
</feature>
<feature type="binding site" evidence="1">
    <location>
        <position position="153"/>
    </location>
    <ligand>
        <name>Zn(2+)</name>
        <dbReference type="ChEBI" id="CHEBI:29105"/>
        <label>2</label>
    </ligand>
</feature>
<feature type="binding site" evidence="1">
    <location>
        <position position="172"/>
    </location>
    <ligand>
        <name>Zn(2+)</name>
        <dbReference type="ChEBI" id="CHEBI:29105"/>
        <label>2</label>
    </ligand>
</feature>
<feature type="binding site" evidence="1">
    <location>
        <position position="175"/>
    </location>
    <ligand>
        <name>Zn(2+)</name>
        <dbReference type="ChEBI" id="CHEBI:29105"/>
        <label>2</label>
    </ligand>
</feature>
<comment type="function">
    <text evidence="1">Probable zinc metalloprotease whose natural substrate is unknown.</text>
</comment>
<comment type="cofactor">
    <cofactor evidence="1">
        <name>Zn(2+)</name>
        <dbReference type="ChEBI" id="CHEBI:29105"/>
    </cofactor>
    <text evidence="1">Binds 2 Zn(2+) ions per subunit. One is catalytic, whereas the other seems to have a structural role.</text>
</comment>
<comment type="subunit">
    <text evidence="1">Monomer.</text>
</comment>
<comment type="similarity">
    <text evidence="1">Belongs to the peptidase M54 family.</text>
</comment>
<gene>
    <name evidence="1" type="primary">amzA</name>
    <name type="ordered locus">PF1860</name>
</gene>
<evidence type="ECO:0000255" key="1">
    <source>
        <dbReference type="HAMAP-Rule" id="MF_01842"/>
    </source>
</evidence>
<proteinExistence type="inferred from homology"/>
<sequence>MRDMIIVVPIGEVPSDVLSFLSENIESFYMKFGIGVKIIGSLPISAFSHAYDFYRNQYLARHFLPALSIIRRDYKALAVMGVTEVDLYESGLNFIFGIAHPGFGVALISLHRLYPEFYGEPPDRKLLKERALKEAMHELGHVFGLEHCPNPKCVMHFSNSIIDTDIKSWMYCKNCLRKLEERLGRGYVRGRT</sequence>
<keyword id="KW-0378">Hydrolase</keyword>
<keyword id="KW-0479">Metal-binding</keyword>
<keyword id="KW-0482">Metalloprotease</keyword>
<keyword id="KW-0645">Protease</keyword>
<keyword id="KW-1185">Reference proteome</keyword>
<keyword id="KW-0862">Zinc</keyword>
<name>AMZA_PYRFU</name>
<protein>
    <recommendedName>
        <fullName evidence="1">Archaemetzincin</fullName>
        <ecNumber evidence="1">3.4.-.-</ecNumber>
    </recommendedName>
</protein>
<reference key="1">
    <citation type="journal article" date="1999" name="Genetics">
        <title>Divergence of the hyperthermophilic archaea Pyrococcus furiosus and P. horikoshii inferred from complete genomic sequences.</title>
        <authorList>
            <person name="Maeder D.L."/>
            <person name="Weiss R.B."/>
            <person name="Dunn D.M."/>
            <person name="Cherry J.L."/>
            <person name="Gonzalez J.M."/>
            <person name="DiRuggiero J."/>
            <person name="Robb F.T."/>
        </authorList>
    </citation>
    <scope>NUCLEOTIDE SEQUENCE [LARGE SCALE GENOMIC DNA]</scope>
    <source>
        <strain>ATCC 43587 / DSM 3638 / JCM 8422 / Vc1</strain>
    </source>
</reference>
<organism>
    <name type="scientific">Pyrococcus furiosus (strain ATCC 43587 / DSM 3638 / JCM 8422 / Vc1)</name>
    <dbReference type="NCBI Taxonomy" id="186497"/>
    <lineage>
        <taxon>Archaea</taxon>
        <taxon>Methanobacteriati</taxon>
        <taxon>Methanobacteriota</taxon>
        <taxon>Thermococci</taxon>
        <taxon>Thermococcales</taxon>
        <taxon>Thermococcaceae</taxon>
        <taxon>Pyrococcus</taxon>
    </lineage>
</organism>
<accession>Q8TZW5</accession>
<dbReference type="EC" id="3.4.-.-" evidence="1"/>
<dbReference type="EMBL" id="AE009950">
    <property type="protein sequence ID" value="AAL81984.1"/>
    <property type="molecule type" value="Genomic_DNA"/>
</dbReference>
<dbReference type="SMR" id="Q8TZW5"/>
<dbReference type="STRING" id="186497.PF1860"/>
<dbReference type="MEROPS" id="M54.001"/>
<dbReference type="PaxDb" id="186497-PF1860"/>
<dbReference type="KEGG" id="pfu:PF1860"/>
<dbReference type="PATRIC" id="fig|186497.12.peg.1930"/>
<dbReference type="eggNOG" id="arCOG00458">
    <property type="taxonomic scope" value="Archaea"/>
</dbReference>
<dbReference type="HOGENOM" id="CLU_108521_2_0_2"/>
<dbReference type="PhylomeDB" id="Q8TZW5"/>
<dbReference type="Proteomes" id="UP000001013">
    <property type="component" value="Chromosome"/>
</dbReference>
<dbReference type="GO" id="GO:0008237">
    <property type="term" value="F:metallopeptidase activity"/>
    <property type="evidence" value="ECO:0007669"/>
    <property type="project" value="UniProtKB-UniRule"/>
</dbReference>
<dbReference type="GO" id="GO:0008270">
    <property type="term" value="F:zinc ion binding"/>
    <property type="evidence" value="ECO:0007669"/>
    <property type="project" value="UniProtKB-UniRule"/>
</dbReference>
<dbReference type="GO" id="GO:0006508">
    <property type="term" value="P:proteolysis"/>
    <property type="evidence" value="ECO:0007669"/>
    <property type="project" value="UniProtKB-UniRule"/>
</dbReference>
<dbReference type="CDD" id="cd11375">
    <property type="entry name" value="Peptidase_M54"/>
    <property type="match status" value="1"/>
</dbReference>
<dbReference type="Gene3D" id="3.40.390.10">
    <property type="entry name" value="Collagenase (Catalytic Domain)"/>
    <property type="match status" value="1"/>
</dbReference>
<dbReference type="HAMAP" id="MF_01842">
    <property type="entry name" value="Archaemetzincin"/>
    <property type="match status" value="1"/>
</dbReference>
<dbReference type="InterPro" id="IPR024079">
    <property type="entry name" value="MetalloPept_cat_dom_sf"/>
</dbReference>
<dbReference type="InterPro" id="IPR012962">
    <property type="entry name" value="Pept_M54_archaemetzincn"/>
</dbReference>
<dbReference type="InterPro" id="IPR012091">
    <property type="entry name" value="Pept_M54_archaemetzncn_arc/bac"/>
</dbReference>
<dbReference type="NCBIfam" id="NF033823">
    <property type="entry name" value="archmetzin"/>
    <property type="match status" value="1"/>
</dbReference>
<dbReference type="PANTHER" id="PTHR15910">
    <property type="entry name" value="ARCHAEMETZINCIN"/>
    <property type="match status" value="1"/>
</dbReference>
<dbReference type="PANTHER" id="PTHR15910:SF1">
    <property type="entry name" value="ARCHAEMETZINCIN-2"/>
    <property type="match status" value="1"/>
</dbReference>
<dbReference type="Pfam" id="PF07998">
    <property type="entry name" value="Peptidase_M54"/>
    <property type="match status" value="1"/>
</dbReference>
<dbReference type="PIRSF" id="PIRSF005785">
    <property type="entry name" value="Zn-prot_arch"/>
    <property type="match status" value="1"/>
</dbReference>
<dbReference type="SUPFAM" id="SSF55486">
    <property type="entry name" value="Metalloproteases ('zincins'), catalytic domain"/>
    <property type="match status" value="1"/>
</dbReference>